<feature type="chain" id="PRO_0000118855" description="NADH-ubiquinone oxidoreductase 12 kDa subunit">
    <location>
        <begin position="1"/>
        <end position="15" status="greater than"/>
    </location>
</feature>
<feature type="non-terminal residue">
    <location>
        <position position="15"/>
    </location>
</feature>
<reference key="1">
    <citation type="submission" date="1996-12" db="UniProtKB">
        <authorList>
            <person name="Herz U."/>
            <person name="Grohmann L."/>
        </authorList>
    </citation>
    <scope>PROTEIN SEQUENCE</scope>
    <source>
        <strain>cv. Bintje</strain>
        <tissue>Tuber</tissue>
    </source>
</reference>
<dbReference type="EC" id="7.1.1.2"/>
<dbReference type="STRING" id="4113.P80731"/>
<dbReference type="InParanoid" id="P80731"/>
<dbReference type="Proteomes" id="UP000011115">
    <property type="component" value="Unassembled WGS sequence"/>
</dbReference>
<dbReference type="GO" id="GO:0005743">
    <property type="term" value="C:mitochondrial inner membrane"/>
    <property type="evidence" value="ECO:0007669"/>
    <property type="project" value="UniProtKB-SubCell"/>
</dbReference>
<dbReference type="GO" id="GO:0008137">
    <property type="term" value="F:NADH dehydrogenase (ubiquinone) activity"/>
    <property type="evidence" value="ECO:0007669"/>
    <property type="project" value="UniProtKB-EC"/>
</dbReference>
<evidence type="ECO:0000250" key="1"/>
<comment type="function">
    <text>Transfer of electrons from NADH to the respiratory chain. The immediate electron acceptor for the enzyme is believed to be ubiquinone.</text>
</comment>
<comment type="catalytic activity">
    <reaction>
        <text>a ubiquinone + NADH + 5 H(+)(in) = a ubiquinol + NAD(+) + 4 H(+)(out)</text>
        <dbReference type="Rhea" id="RHEA:29091"/>
        <dbReference type="Rhea" id="RHEA-COMP:9565"/>
        <dbReference type="Rhea" id="RHEA-COMP:9566"/>
        <dbReference type="ChEBI" id="CHEBI:15378"/>
        <dbReference type="ChEBI" id="CHEBI:16389"/>
        <dbReference type="ChEBI" id="CHEBI:17976"/>
        <dbReference type="ChEBI" id="CHEBI:57540"/>
        <dbReference type="ChEBI" id="CHEBI:57945"/>
        <dbReference type="EC" id="7.1.1.2"/>
    </reaction>
</comment>
<comment type="subunit">
    <text evidence="1">Complex I is composed of about 45 different subunits.</text>
</comment>
<comment type="subcellular location">
    <subcellularLocation>
        <location>Mitochondrion inner membrane</location>
        <topology>Peripheral membrane protein</topology>
        <orientation>Matrix side</orientation>
    </subcellularLocation>
</comment>
<protein>
    <recommendedName>
        <fullName>NADH-ubiquinone oxidoreductase 12 kDa subunit</fullName>
        <ecNumber>7.1.1.2</ecNumber>
    </recommendedName>
    <alternativeName>
        <fullName>Complex I-12kD</fullName>
        <shortName>CI-12kD</shortName>
    </alternativeName>
</protein>
<name>NUO8_SOLTU</name>
<keyword id="KW-0903">Direct protein sequencing</keyword>
<keyword id="KW-0472">Membrane</keyword>
<keyword id="KW-0496">Mitochondrion</keyword>
<keyword id="KW-0999">Mitochondrion inner membrane</keyword>
<keyword id="KW-0520">NAD</keyword>
<keyword id="KW-0560">Oxidoreductase</keyword>
<keyword id="KW-1185">Reference proteome</keyword>
<keyword id="KW-1278">Translocase</keyword>
<keyword id="KW-0830">Ubiquinone</keyword>
<sequence length="15" mass="1672">VHMARNMXVPPXXAD</sequence>
<proteinExistence type="evidence at protein level"/>
<accession>P80731</accession>
<organism>
    <name type="scientific">Solanum tuberosum</name>
    <name type="common">Potato</name>
    <dbReference type="NCBI Taxonomy" id="4113"/>
    <lineage>
        <taxon>Eukaryota</taxon>
        <taxon>Viridiplantae</taxon>
        <taxon>Streptophyta</taxon>
        <taxon>Embryophyta</taxon>
        <taxon>Tracheophyta</taxon>
        <taxon>Spermatophyta</taxon>
        <taxon>Magnoliopsida</taxon>
        <taxon>eudicotyledons</taxon>
        <taxon>Gunneridae</taxon>
        <taxon>Pentapetalae</taxon>
        <taxon>asterids</taxon>
        <taxon>lamiids</taxon>
        <taxon>Solanales</taxon>
        <taxon>Solanaceae</taxon>
        <taxon>Solanoideae</taxon>
        <taxon>Solaneae</taxon>
        <taxon>Solanum</taxon>
    </lineage>
</organism>